<sequence>MAVKMRLLRVGAKGQPSYRVVVADERSPRDGRFIEIVGFYNPRTEPETIQLKEDRVKYWLSVGVKPTDSVRILLRKANMLS</sequence>
<feature type="chain" id="PRO_1000196375" description="Small ribosomal subunit protein bS16">
    <location>
        <begin position="1"/>
        <end position="81"/>
    </location>
</feature>
<gene>
    <name evidence="1" type="primary">rpsP</name>
    <name type="ordered locus">COPRO5265_0699</name>
</gene>
<keyword id="KW-1185">Reference proteome</keyword>
<keyword id="KW-0687">Ribonucleoprotein</keyword>
<keyword id="KW-0689">Ribosomal protein</keyword>
<dbReference type="EMBL" id="CP001145">
    <property type="protein sequence ID" value="ACI17243.1"/>
    <property type="molecule type" value="Genomic_DNA"/>
</dbReference>
<dbReference type="RefSeq" id="WP_012543895.1">
    <property type="nucleotide sequence ID" value="NC_011295.1"/>
</dbReference>
<dbReference type="SMR" id="B5Y8F0"/>
<dbReference type="STRING" id="309798.COPRO5265_0699"/>
<dbReference type="KEGG" id="cpo:COPRO5265_0699"/>
<dbReference type="eggNOG" id="COG0228">
    <property type="taxonomic scope" value="Bacteria"/>
</dbReference>
<dbReference type="HOGENOM" id="CLU_100590_5_0_9"/>
<dbReference type="OrthoDB" id="9807878at2"/>
<dbReference type="Proteomes" id="UP000001732">
    <property type="component" value="Chromosome"/>
</dbReference>
<dbReference type="GO" id="GO:0005737">
    <property type="term" value="C:cytoplasm"/>
    <property type="evidence" value="ECO:0007669"/>
    <property type="project" value="UniProtKB-ARBA"/>
</dbReference>
<dbReference type="GO" id="GO:0015935">
    <property type="term" value="C:small ribosomal subunit"/>
    <property type="evidence" value="ECO:0007669"/>
    <property type="project" value="TreeGrafter"/>
</dbReference>
<dbReference type="GO" id="GO:0003735">
    <property type="term" value="F:structural constituent of ribosome"/>
    <property type="evidence" value="ECO:0007669"/>
    <property type="project" value="InterPro"/>
</dbReference>
<dbReference type="GO" id="GO:0006412">
    <property type="term" value="P:translation"/>
    <property type="evidence" value="ECO:0007669"/>
    <property type="project" value="UniProtKB-UniRule"/>
</dbReference>
<dbReference type="Gene3D" id="3.30.1320.10">
    <property type="match status" value="1"/>
</dbReference>
<dbReference type="HAMAP" id="MF_00385">
    <property type="entry name" value="Ribosomal_bS16"/>
    <property type="match status" value="1"/>
</dbReference>
<dbReference type="InterPro" id="IPR000307">
    <property type="entry name" value="Ribosomal_bS16"/>
</dbReference>
<dbReference type="InterPro" id="IPR023803">
    <property type="entry name" value="Ribosomal_bS16_dom_sf"/>
</dbReference>
<dbReference type="NCBIfam" id="TIGR00002">
    <property type="entry name" value="S16"/>
    <property type="match status" value="1"/>
</dbReference>
<dbReference type="PANTHER" id="PTHR12919">
    <property type="entry name" value="30S RIBOSOMAL PROTEIN S16"/>
    <property type="match status" value="1"/>
</dbReference>
<dbReference type="PANTHER" id="PTHR12919:SF20">
    <property type="entry name" value="SMALL RIBOSOMAL SUBUNIT PROTEIN BS16M"/>
    <property type="match status" value="1"/>
</dbReference>
<dbReference type="Pfam" id="PF00886">
    <property type="entry name" value="Ribosomal_S16"/>
    <property type="match status" value="1"/>
</dbReference>
<dbReference type="SUPFAM" id="SSF54565">
    <property type="entry name" value="Ribosomal protein S16"/>
    <property type="match status" value="1"/>
</dbReference>
<name>RS16_COPPD</name>
<proteinExistence type="inferred from homology"/>
<protein>
    <recommendedName>
        <fullName evidence="1">Small ribosomal subunit protein bS16</fullName>
    </recommendedName>
    <alternativeName>
        <fullName evidence="2">30S ribosomal protein S16</fullName>
    </alternativeName>
</protein>
<evidence type="ECO:0000255" key="1">
    <source>
        <dbReference type="HAMAP-Rule" id="MF_00385"/>
    </source>
</evidence>
<evidence type="ECO:0000305" key="2"/>
<accession>B5Y8F0</accession>
<comment type="similarity">
    <text evidence="1">Belongs to the bacterial ribosomal protein bS16 family.</text>
</comment>
<reference key="1">
    <citation type="submission" date="2008-08" db="EMBL/GenBank/DDBJ databases">
        <title>The complete genome sequence of Coprothermobacter proteolyticus strain ATCC 5245 / DSM 5265 / BT.</title>
        <authorList>
            <person name="Dodson R.J."/>
            <person name="Durkin A.S."/>
            <person name="Wu M."/>
            <person name="Eisen J."/>
            <person name="Sutton G."/>
        </authorList>
    </citation>
    <scope>NUCLEOTIDE SEQUENCE [LARGE SCALE GENOMIC DNA]</scope>
    <source>
        <strain>ATCC 35245 / DSM 5265 / OCM 4 / BT</strain>
    </source>
</reference>
<organism>
    <name type="scientific">Coprothermobacter proteolyticus (strain ATCC 35245 / DSM 5265 / OCM 4 / BT)</name>
    <dbReference type="NCBI Taxonomy" id="309798"/>
    <lineage>
        <taxon>Bacteria</taxon>
        <taxon>Pseudomonadati</taxon>
        <taxon>Coprothermobacterota</taxon>
        <taxon>Coprothermobacteria</taxon>
        <taxon>Coprothermobacterales</taxon>
        <taxon>Coprothermobacteraceae</taxon>
        <taxon>Coprothermobacter</taxon>
    </lineage>
</organism>